<feature type="chain" id="PRO_0000324407" description="Protein LST4">
    <location>
        <begin position="1"/>
        <end position="797"/>
    </location>
</feature>
<feature type="domain" description="uDENN FNIP1/2-type" evidence="2">
    <location>
        <begin position="98"/>
        <end position="285"/>
    </location>
</feature>
<feature type="domain" description="cDENN FNIP1/2-type" evidence="2">
    <location>
        <begin position="293"/>
        <end position="683"/>
    </location>
</feature>
<feature type="domain" description="dDENN FNIP1/2-type" evidence="2">
    <location>
        <begin position="690"/>
        <end position="767"/>
    </location>
</feature>
<feature type="region of interest" description="Disordered" evidence="3">
    <location>
        <begin position="16"/>
        <end position="43"/>
    </location>
</feature>
<feature type="compositionally biased region" description="Low complexity" evidence="3">
    <location>
        <begin position="16"/>
        <end position="35"/>
    </location>
</feature>
<keyword id="KW-0029">Amino-acid transport</keyword>
<keyword id="KW-0653">Protein transport</keyword>
<keyword id="KW-1185">Reference proteome</keyword>
<keyword id="KW-0813">Transport</keyword>
<reference key="1">
    <citation type="journal article" date="2007" name="Proc. Natl. Acad. Sci. U.S.A.">
        <title>Independent sorting-out of thousands of duplicated gene pairs in two yeast species descended from a whole-genome duplication.</title>
        <authorList>
            <person name="Scannell D.R."/>
            <person name="Frank A.C."/>
            <person name="Conant G.C."/>
            <person name="Byrne K.P."/>
            <person name="Woolfit M."/>
            <person name="Wolfe K.H."/>
        </authorList>
    </citation>
    <scope>NUCLEOTIDE SEQUENCE [LARGE SCALE GENOMIC DNA]</scope>
    <source>
        <strain>ATCC 22028 / DSM 70294 / BCRC 21397 / CBS 2163 / NBRC 10782 / NRRL Y-8283 / UCD 57-17</strain>
    </source>
</reference>
<comment type="function">
    <text evidence="1">Involved in extracellular amino acid uptake. Required for the protein trafficking from the Golgi to the plasma membrane (By similarity).</text>
</comment>
<comment type="similarity">
    <text evidence="4">Belongs to the LST4 family.</text>
</comment>
<dbReference type="EMBL" id="DS480383">
    <property type="protein sequence ID" value="EDO18998.1"/>
    <property type="molecule type" value="Genomic_DNA"/>
</dbReference>
<dbReference type="RefSeq" id="XP_001646856.1">
    <property type="nucleotide sequence ID" value="XM_001646806.1"/>
</dbReference>
<dbReference type="SMR" id="A7TFI4"/>
<dbReference type="FunCoup" id="A7TFI4">
    <property type="interactions" value="60"/>
</dbReference>
<dbReference type="STRING" id="436907.A7TFI4"/>
<dbReference type="GeneID" id="5547324"/>
<dbReference type="KEGG" id="vpo:Kpol_2002p69"/>
<dbReference type="eggNOG" id="ENOG502QPJF">
    <property type="taxonomic scope" value="Eukaryota"/>
</dbReference>
<dbReference type="HOGENOM" id="CLU_010482_0_0_1"/>
<dbReference type="InParanoid" id="A7TFI4"/>
<dbReference type="OMA" id="SEYDEYP"/>
<dbReference type="OrthoDB" id="4063558at2759"/>
<dbReference type="PhylomeDB" id="A7TFI4"/>
<dbReference type="Proteomes" id="UP000000267">
    <property type="component" value="Unassembled WGS sequence"/>
</dbReference>
<dbReference type="GO" id="GO:1990877">
    <property type="term" value="C:FNIP-folliculin RagC/D GAP"/>
    <property type="evidence" value="ECO:0007669"/>
    <property type="project" value="EnsemblFungi"/>
</dbReference>
<dbReference type="GO" id="GO:0005774">
    <property type="term" value="C:vacuolar membrane"/>
    <property type="evidence" value="ECO:0007669"/>
    <property type="project" value="EnsemblFungi"/>
</dbReference>
<dbReference type="GO" id="GO:0005096">
    <property type="term" value="F:GTPase activator activity"/>
    <property type="evidence" value="ECO:0007669"/>
    <property type="project" value="EnsemblFungi"/>
</dbReference>
<dbReference type="GO" id="GO:0006865">
    <property type="term" value="P:amino acid transport"/>
    <property type="evidence" value="ECO:0007669"/>
    <property type="project" value="UniProtKB-KW"/>
</dbReference>
<dbReference type="GO" id="GO:0071230">
    <property type="term" value="P:cellular response to amino acid stimulus"/>
    <property type="evidence" value="ECO:0007669"/>
    <property type="project" value="EnsemblFungi"/>
</dbReference>
<dbReference type="GO" id="GO:1904263">
    <property type="term" value="P:positive regulation of TORC1 signaling"/>
    <property type="evidence" value="ECO:0007669"/>
    <property type="project" value="EnsemblFungi"/>
</dbReference>
<dbReference type="GO" id="GO:0015031">
    <property type="term" value="P:protein transport"/>
    <property type="evidence" value="ECO:0007669"/>
    <property type="project" value="UniProtKB-KW"/>
</dbReference>
<dbReference type="InterPro" id="IPR037545">
    <property type="entry name" value="DENN_FNIP1/2"/>
</dbReference>
<dbReference type="InterPro" id="IPR041153">
    <property type="entry name" value="LST4_longin"/>
</dbReference>
<dbReference type="Pfam" id="PF18639">
    <property type="entry name" value="Longin_2"/>
    <property type="match status" value="1"/>
</dbReference>
<dbReference type="PROSITE" id="PS51836">
    <property type="entry name" value="DENN_FNIP12"/>
    <property type="match status" value="1"/>
</dbReference>
<accession>A7TFI4</accession>
<organism>
    <name type="scientific">Vanderwaltozyma polyspora (strain ATCC 22028 / DSM 70294 / BCRC 21397 / CBS 2163 / NBRC 10782 / NRRL Y-8283 / UCD 57-17)</name>
    <name type="common">Kluyveromyces polysporus</name>
    <dbReference type="NCBI Taxonomy" id="436907"/>
    <lineage>
        <taxon>Eukaryota</taxon>
        <taxon>Fungi</taxon>
        <taxon>Dikarya</taxon>
        <taxon>Ascomycota</taxon>
        <taxon>Saccharomycotina</taxon>
        <taxon>Saccharomycetes</taxon>
        <taxon>Saccharomycetales</taxon>
        <taxon>Saccharomycetaceae</taxon>
        <taxon>Vanderwaltozyma</taxon>
    </lineage>
</organism>
<protein>
    <recommendedName>
        <fullName>Protein LST4</fullName>
    </recommendedName>
</protein>
<proteinExistence type="inferred from homology"/>
<gene>
    <name type="primary">LST4</name>
    <name type="ORF">Kpol_2002p69</name>
</gene>
<evidence type="ECO:0000250" key="1"/>
<evidence type="ECO:0000255" key="2">
    <source>
        <dbReference type="PROSITE-ProRule" id="PRU01180"/>
    </source>
</evidence>
<evidence type="ECO:0000256" key="3">
    <source>
        <dbReference type="SAM" id="MobiDB-lite"/>
    </source>
</evidence>
<evidence type="ECO:0000305" key="4"/>
<name>LST4_VANPO</name>
<sequence length="797" mass="89531">MLANLFGKNGLNGSTASLSDSDSGSSSQYNSKPSSQYGSPTSINFKDDTSSILRPISGNILDHMSDDLKSKLFATKDLISDISLAYYDPKSTNSNINISPDSFRLLLTEETGQMVCRNNYRVVLDYVTPKGSYIEQIRPSELKEYIFGSPVRSSDSLEVDKIRVIPNSNILIISRTFHVSSKINRLAICLCLPSYYLPVVMEAWRQVSTWLDNTQASIISIISRLKKPPSTLHLQCDKELSCLLPADARFQFVSEFESIILALQRKIVPCLRSISEIPRLFLYPTTLMKFVELWFKDVFNWMELKDGPRMNFLSTLLAIIIVNFKEELKSSESTRIAIMSGNMVVSNKLINIISGILEPKYKGPLLHTDEDNELSTKLEQLDSIDTVNTSSTEIHMIKKTNSNSSISVSPASTKYQNSNKGWEIPRRRSAHSVASISSGESLAEVIQPSSLKSGSNSLHQLYASLSNNYGTSYGSWFNKRPNISQFMQYSSPSNSNESWDRAASIHRTNSGNSIQQLRAGFGITPQQSPSISEYDEYPWFGTPNSPHVENSATATTSNTTVSSASVPWTTKSITEPNRMYNVHIERDFQRISQTELLDDAFDKICKPGRKLECGLTVTPGNMIHAGVLEIEILNQDCVEKSSELLPRYTSYLRNYNSWFKLQAFPANNESESKVITSMKKDLSVYSYSKALLISLSTRDIKEVTIKKEYKNNTQDTNSFKLIQKTARMFHNGKPQANLSLELNNCILLIESTLKRASELLKPIQSSADTSTAMTQEARQEELLKLFKSIIYFKDTKT</sequence>